<accession>Q10037</accession>
<reference key="1">
    <citation type="journal article" date="1998" name="Science">
        <title>Genome sequence of the nematode C. elegans: a platform for investigating biology.</title>
        <authorList>
            <consortium name="The C. elegans sequencing consortium"/>
        </authorList>
    </citation>
    <scope>NUCLEOTIDE SEQUENCE [LARGE SCALE GENOMIC DNA]</scope>
    <source>
        <strain>Bristol N2</strain>
    </source>
</reference>
<gene>
    <name type="ORF">F15G9.5</name>
</gene>
<sequence length="272" mass="30556">MMIRWKHRGGDIIFLMFTTLAAVSTASEHEHRTHMCSAEGNICSENAATVCRNNTCVSACSLRGMQECECDAEEDNYCYLCCGNSEHQCMAAHHHNILRPNGERWEREACSRCRMHGAELEGLPCDDTDSARLCIGGRCSNSVCHTKSPGSVCDRKMEKLCVDNTCENPCARYAPHLMVCDCPSIDQDTGFASEDRCQLCCYDFNLKPTNRRCQNAYRKYKIMDMFQKPIWRVGLECAGGKVCNKYGVCSSSHISFLVPFFSVILVSLISFI</sequence>
<organism>
    <name type="scientific">Caenorhabditis elegans</name>
    <dbReference type="NCBI Taxonomy" id="6239"/>
    <lineage>
        <taxon>Eukaryota</taxon>
        <taxon>Metazoa</taxon>
        <taxon>Ecdysozoa</taxon>
        <taxon>Nematoda</taxon>
        <taxon>Chromadorea</taxon>
        <taxon>Rhabditida</taxon>
        <taxon>Rhabditina</taxon>
        <taxon>Rhabditomorpha</taxon>
        <taxon>Rhabditoidea</taxon>
        <taxon>Rhabditidae</taxon>
        <taxon>Peloderinae</taxon>
        <taxon>Caenorhabditis</taxon>
    </lineage>
</organism>
<keyword id="KW-0472">Membrane</keyword>
<keyword id="KW-1185">Reference proteome</keyword>
<keyword id="KW-0812">Transmembrane</keyword>
<keyword id="KW-1133">Transmembrane helix</keyword>
<name>YSI5_CAEEL</name>
<comment type="subcellular location">
    <subcellularLocation>
        <location evidence="2">Membrane</location>
        <topology evidence="2">Multi-pass membrane protein</topology>
    </subcellularLocation>
</comment>
<dbReference type="EMBL" id="Z47068">
    <property type="protein sequence ID" value="CAA87334.2"/>
    <property type="molecule type" value="Genomic_DNA"/>
</dbReference>
<dbReference type="PIR" id="G89614">
    <property type="entry name" value="G89614"/>
</dbReference>
<dbReference type="PIR" id="T20991">
    <property type="entry name" value="T20991"/>
</dbReference>
<dbReference type="RefSeq" id="NP_509637.1">
    <property type="nucleotide sequence ID" value="NM_077236.7"/>
</dbReference>
<dbReference type="FunCoup" id="Q10037">
    <property type="interactions" value="2"/>
</dbReference>
<dbReference type="STRING" id="6239.F15G9.5.1"/>
<dbReference type="PaxDb" id="6239-F15G9.5"/>
<dbReference type="EnsemblMetazoa" id="F15G9.5.1">
    <property type="protein sequence ID" value="F15G9.5.1"/>
    <property type="gene ID" value="WBGene00008868"/>
</dbReference>
<dbReference type="GeneID" id="181185"/>
<dbReference type="KEGG" id="cel:CELE_F15G9.5"/>
<dbReference type="UCSC" id="F15G9.5">
    <property type="organism name" value="c. elegans"/>
</dbReference>
<dbReference type="AGR" id="WB:WBGene00008868"/>
<dbReference type="CTD" id="181185"/>
<dbReference type="WormBase" id="F15G9.5">
    <property type="protein sequence ID" value="CE23661"/>
    <property type="gene ID" value="WBGene00008868"/>
</dbReference>
<dbReference type="eggNOG" id="ENOG502RXTT">
    <property type="taxonomic scope" value="Eukaryota"/>
</dbReference>
<dbReference type="GeneTree" id="ENSGT00940000176575"/>
<dbReference type="HOGENOM" id="CLU_1058868_0_0_1"/>
<dbReference type="InParanoid" id="Q10037"/>
<dbReference type="OMA" id="CQNAYRK"/>
<dbReference type="OrthoDB" id="5912366at2759"/>
<dbReference type="PhylomeDB" id="Q10037"/>
<dbReference type="PRO" id="PR:Q10037"/>
<dbReference type="Proteomes" id="UP000001940">
    <property type="component" value="Chromosome X"/>
</dbReference>
<dbReference type="Bgee" id="WBGene00008868">
    <property type="expression patterns" value="Expressed in larva and 3 other cell types or tissues"/>
</dbReference>
<dbReference type="GO" id="GO:0016020">
    <property type="term" value="C:membrane"/>
    <property type="evidence" value="ECO:0007669"/>
    <property type="project" value="UniProtKB-SubCell"/>
</dbReference>
<protein>
    <recommendedName>
        <fullName>Uncharacterized protein F15G9.5</fullName>
    </recommendedName>
</protein>
<feature type="chain" id="PRO_0000065300" description="Uncharacterized protein F15G9.5">
    <location>
        <begin position="1"/>
        <end position="272"/>
    </location>
</feature>
<feature type="transmembrane region" description="Helical" evidence="1">
    <location>
        <begin position="9"/>
        <end position="29"/>
    </location>
</feature>
<feature type="transmembrane region" description="Helical" evidence="1">
    <location>
        <begin position="252"/>
        <end position="272"/>
    </location>
</feature>
<proteinExistence type="predicted"/>
<evidence type="ECO:0000255" key="1"/>
<evidence type="ECO:0000305" key="2"/>